<keyword id="KW-0029">Amino-acid transport</keyword>
<keyword id="KW-0997">Cell inner membrane</keyword>
<keyword id="KW-1003">Cell membrane</keyword>
<keyword id="KW-0472">Membrane</keyword>
<keyword id="KW-0769">Symport</keyword>
<keyword id="KW-0812">Transmembrane</keyword>
<keyword id="KW-1133">Transmembrane helix</keyword>
<keyword id="KW-0813">Transport</keyword>
<proteinExistence type="inferred from homology"/>
<gene>
    <name evidence="1" type="primary">sstT</name>
    <name type="ordered locus">NTHI1589</name>
</gene>
<reference key="1">
    <citation type="journal article" date="2005" name="J. Bacteriol.">
        <title>Genomic sequence of an otitis media isolate of nontypeable Haemophilus influenzae: comparative study with H. influenzae serotype d, strain KW20.</title>
        <authorList>
            <person name="Harrison A."/>
            <person name="Dyer D.W."/>
            <person name="Gillaspy A."/>
            <person name="Ray W.C."/>
            <person name="Mungur R."/>
            <person name="Carson M.B."/>
            <person name="Zhong H."/>
            <person name="Gipson J."/>
            <person name="Gipson M."/>
            <person name="Johnson L.S."/>
            <person name="Lewis L."/>
            <person name="Bakaletz L.O."/>
            <person name="Munson R.S. Jr."/>
        </authorList>
    </citation>
    <scope>NUCLEOTIDE SEQUENCE [LARGE SCALE GENOMIC DNA]</scope>
    <source>
        <strain>86-028NP</strain>
    </source>
</reference>
<dbReference type="EMBL" id="CP000057">
    <property type="protein sequence ID" value="AAX88392.1"/>
    <property type="molecule type" value="Genomic_DNA"/>
</dbReference>
<dbReference type="RefSeq" id="WP_011272546.1">
    <property type="nucleotide sequence ID" value="NC_007146.2"/>
</dbReference>
<dbReference type="SMR" id="Q4QKQ5"/>
<dbReference type="GeneID" id="93220327"/>
<dbReference type="KEGG" id="hit:NTHI1589"/>
<dbReference type="HOGENOM" id="CLU_044581_0_0_6"/>
<dbReference type="Proteomes" id="UP000002525">
    <property type="component" value="Chromosome"/>
</dbReference>
<dbReference type="GO" id="GO:0005886">
    <property type="term" value="C:plasma membrane"/>
    <property type="evidence" value="ECO:0007669"/>
    <property type="project" value="UniProtKB-SubCell"/>
</dbReference>
<dbReference type="GO" id="GO:0005295">
    <property type="term" value="F:neutral L-amino acid:sodium symporter activity"/>
    <property type="evidence" value="ECO:0007669"/>
    <property type="project" value="TreeGrafter"/>
</dbReference>
<dbReference type="GO" id="GO:0032329">
    <property type="term" value="P:serine transport"/>
    <property type="evidence" value="ECO:0007669"/>
    <property type="project" value="InterPro"/>
</dbReference>
<dbReference type="GO" id="GO:0015826">
    <property type="term" value="P:threonine transport"/>
    <property type="evidence" value="ECO:0007669"/>
    <property type="project" value="InterPro"/>
</dbReference>
<dbReference type="FunFam" id="1.10.3860.10:FF:000003">
    <property type="entry name" value="Serine/threonine transporter sstT"/>
    <property type="match status" value="1"/>
</dbReference>
<dbReference type="Gene3D" id="1.10.3860.10">
    <property type="entry name" value="Sodium:dicarboxylate symporter"/>
    <property type="match status" value="1"/>
</dbReference>
<dbReference type="HAMAP" id="MF_01582">
    <property type="entry name" value="Ser_Thr_transp_SstT"/>
    <property type="match status" value="1"/>
</dbReference>
<dbReference type="InterPro" id="IPR001991">
    <property type="entry name" value="Na-dicarboxylate_symporter"/>
</dbReference>
<dbReference type="InterPro" id="IPR036458">
    <property type="entry name" value="Na:dicarbo_symporter_sf"/>
</dbReference>
<dbReference type="InterPro" id="IPR023025">
    <property type="entry name" value="Ser_Thr_transp_SstT"/>
</dbReference>
<dbReference type="NCBIfam" id="NF010151">
    <property type="entry name" value="PRK13628.1"/>
    <property type="match status" value="1"/>
</dbReference>
<dbReference type="PANTHER" id="PTHR42865">
    <property type="entry name" value="PROTON/GLUTAMATE-ASPARTATE SYMPORTER"/>
    <property type="match status" value="1"/>
</dbReference>
<dbReference type="PANTHER" id="PTHR42865:SF8">
    <property type="entry name" value="SERINE_THREONINE TRANSPORTER SSTT"/>
    <property type="match status" value="1"/>
</dbReference>
<dbReference type="Pfam" id="PF00375">
    <property type="entry name" value="SDF"/>
    <property type="match status" value="1"/>
</dbReference>
<dbReference type="PRINTS" id="PR00173">
    <property type="entry name" value="EDTRNSPORT"/>
</dbReference>
<dbReference type="SUPFAM" id="SSF118215">
    <property type="entry name" value="Proton glutamate symport protein"/>
    <property type="match status" value="1"/>
</dbReference>
<evidence type="ECO:0000255" key="1">
    <source>
        <dbReference type="HAMAP-Rule" id="MF_01582"/>
    </source>
</evidence>
<feature type="chain" id="PRO_0000309092" description="Serine/threonine transporter SstT">
    <location>
        <begin position="1"/>
        <end position="414"/>
    </location>
</feature>
<feature type="transmembrane region" description="Helical" evidence="1">
    <location>
        <begin position="22"/>
        <end position="42"/>
    </location>
</feature>
<feature type="transmembrane region" description="Helical" evidence="1">
    <location>
        <begin position="54"/>
        <end position="74"/>
    </location>
</feature>
<feature type="transmembrane region" description="Helical" evidence="1">
    <location>
        <begin position="89"/>
        <end position="109"/>
    </location>
</feature>
<feature type="transmembrane region" description="Helical" evidence="1">
    <location>
        <begin position="148"/>
        <end position="168"/>
    </location>
</feature>
<feature type="transmembrane region" description="Helical" evidence="1">
    <location>
        <begin position="189"/>
        <end position="209"/>
    </location>
</feature>
<feature type="transmembrane region" description="Helical" evidence="1">
    <location>
        <begin position="223"/>
        <end position="243"/>
    </location>
</feature>
<feature type="transmembrane region" description="Helical" evidence="1">
    <location>
        <begin position="305"/>
        <end position="325"/>
    </location>
</feature>
<feature type="transmembrane region" description="Helical" evidence="1">
    <location>
        <begin position="337"/>
        <end position="357"/>
    </location>
</feature>
<sequence length="414" mass="43446">MNTSRLFSLLFQGSLVKRIAAGLVLGIVVALISAPLQETIGFNLAEKVGVLGTIFVKALRAVAPILIFFLVMAALANRKIGTKSNMKEIIVLYLLGTFLAAFVAVIAGFVFPTEVVLATKEDASSAPQAVGQVLFTLILNVVDNPLNAIFKANFIGVLAWSIGLGLALRHASDATKNVLSDFAEGVSKIVHVIISFAPFGVFGLVAETLSDKGLVALGGYVQLLAVLIGTMLFTAFVVNPILVYWKIRRNPYPLVWTCVRESGVTAFFTRSSAANIPVNIELAKRLNLDEETYSVSIPLGANINMAGAAITITILTLAAVHTLGLEVSFVSALLLSIVAALCACGASGVAGGSLLLIPLACSLFGISDDVAAQMIGVGFIIGILQDSTETALNSSTDVLFTAAVCMEEERKNAA</sequence>
<protein>
    <recommendedName>
        <fullName evidence="1">Serine/threonine transporter SstT</fullName>
    </recommendedName>
    <alternativeName>
        <fullName evidence="1">Na(+)/serine-threonine symporter</fullName>
    </alternativeName>
</protein>
<comment type="function">
    <text evidence="1">Involved in the import of serine and threonine into the cell, with the concomitant import of sodium (symport system).</text>
</comment>
<comment type="catalytic activity">
    <reaction evidence="1">
        <text>L-serine(in) + Na(+)(in) = L-serine(out) + Na(+)(out)</text>
        <dbReference type="Rhea" id="RHEA:29575"/>
        <dbReference type="ChEBI" id="CHEBI:29101"/>
        <dbReference type="ChEBI" id="CHEBI:33384"/>
    </reaction>
    <physiologicalReaction direction="right-to-left" evidence="1">
        <dbReference type="Rhea" id="RHEA:29577"/>
    </physiologicalReaction>
</comment>
<comment type="catalytic activity">
    <reaction evidence="1">
        <text>L-threonine(in) + Na(+)(in) = L-threonine(out) + Na(+)(out)</text>
        <dbReference type="Rhea" id="RHEA:69999"/>
        <dbReference type="ChEBI" id="CHEBI:29101"/>
        <dbReference type="ChEBI" id="CHEBI:57926"/>
    </reaction>
    <physiologicalReaction direction="right-to-left" evidence="1">
        <dbReference type="Rhea" id="RHEA:70001"/>
    </physiologicalReaction>
</comment>
<comment type="subcellular location">
    <subcellularLocation>
        <location evidence="1">Cell inner membrane</location>
        <topology evidence="1">Multi-pass membrane protein</topology>
    </subcellularLocation>
</comment>
<comment type="similarity">
    <text evidence="1">Belongs to the dicarboxylate/amino acid:cation symporter (DAACS) (TC 2.A.23) family.</text>
</comment>
<accession>Q4QKQ5</accession>
<organism>
    <name type="scientific">Haemophilus influenzae (strain 86-028NP)</name>
    <dbReference type="NCBI Taxonomy" id="281310"/>
    <lineage>
        <taxon>Bacteria</taxon>
        <taxon>Pseudomonadati</taxon>
        <taxon>Pseudomonadota</taxon>
        <taxon>Gammaproteobacteria</taxon>
        <taxon>Pasteurellales</taxon>
        <taxon>Pasteurellaceae</taxon>
        <taxon>Haemophilus</taxon>
    </lineage>
</organism>
<name>SSTT_HAEI8</name>